<feature type="signal peptide" evidence="2">
    <location>
        <begin position="1"/>
        <end position="24"/>
    </location>
</feature>
<feature type="chain" id="PRO_0000018135" description="Lipoprotein LprA">
    <location>
        <begin position="25"/>
        <end position="244"/>
    </location>
</feature>
<feature type="lipid moiety-binding region" description="N-palmitoyl cysteine" evidence="2 8">
    <location>
        <position position="25"/>
    </location>
</feature>
<feature type="lipid moiety-binding region" description="S-diacylglycerol cysteine" evidence="2 8">
    <location>
        <position position="25"/>
    </location>
</feature>
<feature type="mutagenesis site" description="When expressed from this site no longer acts as a TLR2 agonist, suggests active protein is acylated. No glycosylated form detected." evidence="3">
    <original>C</original>
    <variation>M</variation>
    <location>
        <position position="25"/>
    </location>
</feature>
<protein>
    <recommendedName>
        <fullName>Lipoprotein LprA</fullName>
    </recommendedName>
</protein>
<keyword id="KW-1003">Cell membrane</keyword>
<keyword id="KW-0325">Glycoprotein</keyword>
<keyword id="KW-0446">Lipid-binding</keyword>
<keyword id="KW-0449">Lipoprotein</keyword>
<keyword id="KW-0472">Membrane</keyword>
<keyword id="KW-0564">Palmitate</keyword>
<keyword id="KW-1185">Reference proteome</keyword>
<keyword id="KW-0732">Signal</keyword>
<reference key="1">
    <citation type="journal article" date="1998" name="Nature">
        <title>Deciphering the biology of Mycobacterium tuberculosis from the complete genome sequence.</title>
        <authorList>
            <person name="Cole S.T."/>
            <person name="Brosch R."/>
            <person name="Parkhill J."/>
            <person name="Garnier T."/>
            <person name="Churcher C.M."/>
            <person name="Harris D.E."/>
            <person name="Gordon S.V."/>
            <person name="Eiglmeier K."/>
            <person name="Gas S."/>
            <person name="Barry C.E. III"/>
            <person name="Tekaia F."/>
            <person name="Badcock K."/>
            <person name="Basham D."/>
            <person name="Brown D."/>
            <person name="Chillingworth T."/>
            <person name="Connor R."/>
            <person name="Davies R.M."/>
            <person name="Devlin K."/>
            <person name="Feltwell T."/>
            <person name="Gentles S."/>
            <person name="Hamlin N."/>
            <person name="Holroyd S."/>
            <person name="Hornsby T."/>
            <person name="Jagels K."/>
            <person name="Krogh A."/>
            <person name="McLean J."/>
            <person name="Moule S."/>
            <person name="Murphy L.D."/>
            <person name="Oliver S."/>
            <person name="Osborne J."/>
            <person name="Quail M.A."/>
            <person name="Rajandream M.A."/>
            <person name="Rogers J."/>
            <person name="Rutter S."/>
            <person name="Seeger K."/>
            <person name="Skelton S."/>
            <person name="Squares S."/>
            <person name="Squares R."/>
            <person name="Sulston J.E."/>
            <person name="Taylor K."/>
            <person name="Whitehead S."/>
            <person name="Barrell B.G."/>
        </authorList>
    </citation>
    <scope>NUCLEOTIDE SEQUENCE [LARGE SCALE GENOMIC DNA]</scope>
    <source>
        <strain>ATCC 25618 / H37Rv</strain>
    </source>
</reference>
<reference key="2">
    <citation type="journal article" date="2004" name="J. Immunol.">
        <title>Mycobacterium tuberculosis LprG (Rv1411c): a novel TLR-2 ligand that inhibits human macrophage class II MHC antigen processing.</title>
        <authorList>
            <person name="Gehring A.J."/>
            <person name="Dobos K.M."/>
            <person name="Belisle J.T."/>
            <person name="Harding C.V."/>
            <person name="Boom W.H."/>
        </authorList>
    </citation>
    <scope>IDENTIFICATION BY MASS SPECTROMETRY</scope>
    <source>
        <strain>ATCC 25618 / H37Rv</strain>
    </source>
</reference>
<reference key="3">
    <citation type="journal article" date="2006" name="J. Immunol.">
        <title>Mycobacterium tuberculosis LprA is a lipoprotein agonist of TLR2 that regulates innate immunity and APC function.</title>
        <authorList>
            <person name="Pecora N.D."/>
            <person name="Gehring A.J."/>
            <person name="Canaday D.H."/>
            <person name="Boom W.H."/>
            <person name="Harding C.V."/>
        </authorList>
    </citation>
    <scope>FUNCTION</scope>
    <scope>SUBCELLULAR LOCATION</scope>
    <scope>EXPRESSION IN M.SMEGMATIS</scope>
    <scope>GLYCOSYLATION</scope>
    <scope>MUTAGENESIS OF CYS-25</scope>
    <source>
        <strain>H37Rv</strain>
    </source>
</reference>
<reference key="4">
    <citation type="journal article" date="2009" name="Cell. Immunol.">
        <title>TLR2 and its co-receptors determine responses of macrophages and dendritic cells to lipoproteins of Mycobacterium tuberculosis.</title>
        <authorList>
            <person name="Drage M.G."/>
            <person name="Pecora N.D."/>
            <person name="Hise A.G."/>
            <person name="Febbraio M."/>
            <person name="Silverstein R.L."/>
            <person name="Golenbock D.T."/>
            <person name="Boom W.H."/>
            <person name="Harding C.V."/>
        </authorList>
    </citation>
    <scope>FUNCTION IN INFECTION</scope>
    <source>
        <strain>H37Rv</strain>
    </source>
</reference>
<reference key="5">
    <citation type="journal article" date="2010" name="Nat. Struct. Mol. Biol.">
        <title>Mycobacterium tuberculosis lipoprotein LprG (Rv1411c) binds triacylated glycolipid agonists of Toll-like receptor 2.</title>
        <authorList>
            <person name="Drage M.G."/>
            <person name="Tsai H.C."/>
            <person name="Pecora N.D."/>
            <person name="Cheng T.Y."/>
            <person name="Arida A.R."/>
            <person name="Shukla S."/>
            <person name="Rojas R.E."/>
            <person name="Seshadri C."/>
            <person name="Moody D.B."/>
            <person name="Boom W.H."/>
            <person name="Sacchettini J.C."/>
            <person name="Harding C.V."/>
        </authorList>
    </citation>
    <scope>FUNCTION</scope>
    <scope>LIPID-BINDING</scope>
    <scope>PALMITOYLATION AT CYS-25</scope>
    <scope>DIACYLGLYCEROL AT CYS-25</scope>
    <source>
        <strain>H37Rv</strain>
    </source>
</reference>
<reference key="6">
    <citation type="journal article" date="2010" name="Nat. Rev. Microbiol.">
        <title>Regulation of antigen presentation by Mycobacterium tuberculosis: a role for Toll-like receptors.</title>
        <authorList>
            <person name="Harding C.V."/>
            <person name="Boom W.H."/>
        </authorList>
    </citation>
    <scope>REVIEW</scope>
</reference>
<reference key="7">
    <citation type="journal article" date="2011" name="Mol. Cell. Proteomics">
        <title>Proteogenomic analysis of Mycobacterium tuberculosis by high resolution mass spectrometry.</title>
        <authorList>
            <person name="Kelkar D.S."/>
            <person name="Kumar D."/>
            <person name="Kumar P."/>
            <person name="Balakrishnan L."/>
            <person name="Muthusamy B."/>
            <person name="Yadav A.K."/>
            <person name="Shrivastava P."/>
            <person name="Marimuthu A."/>
            <person name="Anand S."/>
            <person name="Sundaram H."/>
            <person name="Kingsbury R."/>
            <person name="Harsha H.C."/>
            <person name="Nair B."/>
            <person name="Prasad T.S."/>
            <person name="Chauhan D.S."/>
            <person name="Katoch K."/>
            <person name="Katoch V.M."/>
            <person name="Kumar P."/>
            <person name="Chaerkady R."/>
            <person name="Ramachandran S."/>
            <person name="Dash D."/>
            <person name="Pandey A."/>
        </authorList>
    </citation>
    <scope>IDENTIFICATION BY MASS SPECTROMETRY [LARGE SCALE ANALYSIS]</scope>
    <source>
        <strain>ATCC 25618 / H37Rv</strain>
    </source>
</reference>
<accession>P9WK55</accession>
<accession>L0T656</accession>
<accession>Q11049</accession>
<dbReference type="EMBL" id="AL123456">
    <property type="protein sequence ID" value="CCP44026.1"/>
    <property type="molecule type" value="Genomic_DNA"/>
</dbReference>
<dbReference type="PIR" id="F70754">
    <property type="entry name" value="F70754"/>
</dbReference>
<dbReference type="RefSeq" id="NP_215786.1">
    <property type="nucleotide sequence ID" value="NC_000962.3"/>
</dbReference>
<dbReference type="RefSeq" id="WP_003406562.1">
    <property type="nucleotide sequence ID" value="NZ_NVQJ01000030.1"/>
</dbReference>
<dbReference type="SMR" id="P9WK55"/>
<dbReference type="STRING" id="83332.Rv1270c"/>
<dbReference type="PaxDb" id="83332-Rv1270c"/>
<dbReference type="DNASU" id="887017"/>
<dbReference type="GeneID" id="887017"/>
<dbReference type="KEGG" id="mtu:Rv1270c"/>
<dbReference type="KEGG" id="mtv:RVBD_1270c"/>
<dbReference type="TubercuList" id="Rv1270c"/>
<dbReference type="eggNOG" id="ENOG50338Y0">
    <property type="taxonomic scope" value="Bacteria"/>
</dbReference>
<dbReference type="InParanoid" id="P9WK55"/>
<dbReference type="OrthoDB" id="4711443at2"/>
<dbReference type="PhylomeDB" id="P9WK55"/>
<dbReference type="Proteomes" id="UP000001584">
    <property type="component" value="Chromosome"/>
</dbReference>
<dbReference type="GO" id="GO:0005576">
    <property type="term" value="C:extracellular region"/>
    <property type="evidence" value="ECO:0007005"/>
    <property type="project" value="MTBBASE"/>
</dbReference>
<dbReference type="GO" id="GO:0009274">
    <property type="term" value="C:peptidoglycan-based cell wall"/>
    <property type="evidence" value="ECO:0007005"/>
    <property type="project" value="MTBBASE"/>
</dbReference>
<dbReference type="GO" id="GO:0005886">
    <property type="term" value="C:plasma membrane"/>
    <property type="evidence" value="ECO:0007005"/>
    <property type="project" value="MTBBASE"/>
</dbReference>
<dbReference type="GO" id="GO:0008289">
    <property type="term" value="F:lipid binding"/>
    <property type="evidence" value="ECO:0007669"/>
    <property type="project" value="UniProtKB-KW"/>
</dbReference>
<dbReference type="GO" id="GO:0048018">
    <property type="term" value="F:receptor ligand activity"/>
    <property type="evidence" value="ECO:0000314"/>
    <property type="project" value="MTBBASE"/>
</dbReference>
<dbReference type="CDD" id="cd16334">
    <property type="entry name" value="LppX-like"/>
    <property type="match status" value="1"/>
</dbReference>
<dbReference type="FunFam" id="2.50.20.20:FF:000003">
    <property type="entry name" value="Lipoprotein LprA"/>
    <property type="match status" value="1"/>
</dbReference>
<dbReference type="Gene3D" id="2.50.20.20">
    <property type="match status" value="1"/>
</dbReference>
<dbReference type="InterPro" id="IPR029046">
    <property type="entry name" value="LolA/LolB/LppX"/>
</dbReference>
<dbReference type="InterPro" id="IPR009830">
    <property type="entry name" value="LppX/LprAFG"/>
</dbReference>
<dbReference type="Pfam" id="PF07161">
    <property type="entry name" value="LppX_LprAFG"/>
    <property type="match status" value="1"/>
</dbReference>
<dbReference type="SUPFAM" id="SSF89392">
    <property type="entry name" value="Prokaryotic lipoproteins and lipoprotein localization factors"/>
    <property type="match status" value="1"/>
</dbReference>
<dbReference type="PROSITE" id="PS51257">
    <property type="entry name" value="PROKAR_LIPOPROTEIN"/>
    <property type="match status" value="1"/>
</dbReference>
<gene>
    <name type="primary">lprA</name>
    <name type="ordered locus">Rv1270c</name>
    <name type="ORF">MTCY50.12</name>
</gene>
<comment type="function">
    <text evidence="3 4 5">Constitutes a host TLR2 agonist (toll-like receptor), shown experimentally for human and mouse (PubMed:19362712). In host cells full-length (acylated) protein acts as a TLR2 agonist, inducing human and murine macrophages to produce cytokines, inducing murine dendritic cell maturation and cytokine production and inhibiting antibody processing in murine macrophages (PubMed:16785538). Binds diacylated phosphatidyl-myo-inositol mannosides (PIMs) (PubMed:20694006). Does not induce murine macrophage apoptosis or necrosis (PubMed:16785538). Non-acylated protein does not act as a TLR2 agonist (PubMed:20694006). Requires only host TLR2 as receptors to elicit host response in mouse, although TLR6 may play a redundant role, also requires CD14 and CD16 as accessory receptors (PubMed:19362712).</text>
</comment>
<comment type="subcellular location">
    <subcellularLocation>
        <location evidence="2">Cell membrane</location>
        <topology evidence="2">Lipid-anchor</topology>
    </subcellularLocation>
    <text evidence="7">May be shed from the cell surface in infected host cells.</text>
</comment>
<comment type="PTM">
    <text evidence="1 3 8">Modified by Lgt on Cys-25 with an S-linked diacylglycerol, signal peptide is removed by LspA, Cys-25 is further modifed with an amide group on the amino group by Lnt yielding a triacylated protein (PubMed:20694006). Upon expression in M.smegmatis non-glycosylated form and glycosylated forms are detected (by concanavalin A binding); when only the mature sequence is expressed from mutated protein only the non-glycosylated form is detected (PubMed:16785538).</text>
</comment>
<comment type="similarity">
    <text evidence="6">Belongs to the LppX/LprAFG lipoprotein family.</text>
</comment>
<organism>
    <name type="scientific">Mycobacterium tuberculosis (strain ATCC 25618 / H37Rv)</name>
    <dbReference type="NCBI Taxonomy" id="83332"/>
    <lineage>
        <taxon>Bacteria</taxon>
        <taxon>Bacillati</taxon>
        <taxon>Actinomycetota</taxon>
        <taxon>Actinomycetes</taxon>
        <taxon>Mycobacteriales</taxon>
        <taxon>Mycobacteriaceae</taxon>
        <taxon>Mycobacterium</taxon>
        <taxon>Mycobacterium tuberculosis complex</taxon>
    </lineage>
</organism>
<evidence type="ECO:0000250" key="1">
    <source>
        <dbReference type="UniProtKB" id="P9WK47"/>
    </source>
</evidence>
<evidence type="ECO:0000255" key="2">
    <source>
        <dbReference type="PROSITE-ProRule" id="PRU00303"/>
    </source>
</evidence>
<evidence type="ECO:0000269" key="3">
    <source>
    </source>
</evidence>
<evidence type="ECO:0000269" key="4">
    <source>
    </source>
</evidence>
<evidence type="ECO:0000269" key="5">
    <source>
    </source>
</evidence>
<evidence type="ECO:0000305" key="6"/>
<evidence type="ECO:0000305" key="7">
    <source>
    </source>
</evidence>
<evidence type="ECO:0000305" key="8">
    <source>
    </source>
</evidence>
<name>LPRA_MYCTU</name>
<sequence length="244" mass="24874">MKHPPCSVVAAATAILAVVLAIGGCSTEGDAGKASDTAATASNGDAAMLLKQATDAMRKVTGMHVRLAVTGDVPNLRVTKLEGDISNTPQTVATGSATLLVGNKSEDAKFVYVDGHLYSDLGQPGTYTDFGNGASIYNVSVLLDPNKGLANLLANLKDASVAGSQQADGVATTKITGNSSADDIATLAGSRLTSEDVKTVPTTVWIASDGSSHLVQIQIAPTKDTSVTLTMSDWGKQVTATKPV</sequence>
<proteinExistence type="evidence at protein level"/>